<reference key="1">
    <citation type="submission" date="2003-06" db="EMBL/GenBank/DDBJ databases">
        <authorList>
            <consortium name="NIH - Zebrafish Gene Collection (ZGC) project"/>
        </authorList>
    </citation>
    <scope>NUCLEOTIDE SEQUENCE [LARGE SCALE MRNA]</scope>
    <source>
        <tissue>Kidney</tissue>
    </source>
</reference>
<comment type="function">
    <text evidence="2">Thiol-dependent isopeptidase that specifically cleaves UFM1, a ubiquitin-like modifier protein, from conjugated proteins. While it is also able to mediate the processing of UFM1 precursors, a prerequisite for conjugation reactions, ufsp2 mainly acts as a protein deUFMylase that mediates deconjugation of UFM1 from target proteins.</text>
</comment>
<comment type="subcellular location">
    <subcellularLocation>
        <location evidence="1">Endoplasmic reticulum</location>
    </subcellularLocation>
    <subcellularLocation>
        <location evidence="1">Cytoplasm</location>
    </subcellularLocation>
    <subcellularLocation>
        <location evidence="1">Nucleus</location>
    </subcellularLocation>
</comment>
<comment type="similarity">
    <text evidence="3">Belongs to the peptidase C78 family.</text>
</comment>
<sequence>MGFQSSVEGLTQASACGDILQYIESDDGGNKKSSKKKDKKKSGPIVVNLKLLFEVTDPAGNEAPSLMRMSAQQHSVKMPLPLDCVLSVSADESMTTVFTGLVEALNKQIADMEEVVLRYRKGSSFLVPQPFHFQLPKPAGLTTVIYPAGVPDSQLQAVREDLHRKFELSLDRPYLRRANAFHFPYEAYKDGYLRNPHIHLNPPNIEDAKLYLVQGVYSYHHYMQDRVDDDGWGCAYRSLQTICSWFQQQGYVETAVPTHTQIQQALVDVGDKEPRFVGSRQWIGSIEVQAVLNQLLGVTSKIMFVSQGSELATKGRELANHFHTEGTPVMIGGGVLAHTILGVAWSENTGEIRFLILDPHYTGGEDLQIITDKGWCGWKGPEFWDQNAYYNLCLPQRPKTV</sequence>
<dbReference type="EC" id="3.4.22.-" evidence="2"/>
<dbReference type="EMBL" id="BC053257">
    <property type="protein sequence ID" value="AAH53257.1"/>
    <property type="molecule type" value="mRNA"/>
</dbReference>
<dbReference type="RefSeq" id="NP_942105.1">
    <property type="nucleotide sequence ID" value="NM_198810.1"/>
</dbReference>
<dbReference type="SMR" id="Q7T347"/>
<dbReference type="FunCoup" id="Q7T347">
    <property type="interactions" value="811"/>
</dbReference>
<dbReference type="STRING" id="7955.ENSDARP00000110184"/>
<dbReference type="MEROPS" id="C78.002"/>
<dbReference type="PaxDb" id="7955-ENSDARP00000110184"/>
<dbReference type="GeneID" id="336782"/>
<dbReference type="KEGG" id="dre:336782"/>
<dbReference type="AGR" id="ZFIN:ZDB-GENE-030131-8726"/>
<dbReference type="CTD" id="55325"/>
<dbReference type="ZFIN" id="ZDB-GENE-030131-8726">
    <property type="gene designation" value="ufsp2"/>
</dbReference>
<dbReference type="eggNOG" id="KOG2433">
    <property type="taxonomic scope" value="Eukaryota"/>
</dbReference>
<dbReference type="InParanoid" id="Q7T347"/>
<dbReference type="OrthoDB" id="417506at2759"/>
<dbReference type="PRO" id="PR:Q7T347"/>
<dbReference type="Proteomes" id="UP000000437">
    <property type="component" value="Alternate scaffold 1"/>
</dbReference>
<dbReference type="Proteomes" id="UP000000437">
    <property type="component" value="Chromosome 1"/>
</dbReference>
<dbReference type="GO" id="GO:0005737">
    <property type="term" value="C:cytoplasm"/>
    <property type="evidence" value="ECO:0000250"/>
    <property type="project" value="UniProtKB"/>
</dbReference>
<dbReference type="GO" id="GO:0005783">
    <property type="term" value="C:endoplasmic reticulum"/>
    <property type="evidence" value="ECO:0000250"/>
    <property type="project" value="UniProtKB"/>
</dbReference>
<dbReference type="GO" id="GO:0005634">
    <property type="term" value="C:nucleus"/>
    <property type="evidence" value="ECO:0000250"/>
    <property type="project" value="UniProtKB"/>
</dbReference>
<dbReference type="GO" id="GO:0071567">
    <property type="term" value="F:deUFMylase activity"/>
    <property type="evidence" value="ECO:0000250"/>
    <property type="project" value="UniProtKB"/>
</dbReference>
<dbReference type="GO" id="GO:0006508">
    <property type="term" value="P:proteolysis"/>
    <property type="evidence" value="ECO:0000250"/>
    <property type="project" value="UniProtKB"/>
</dbReference>
<dbReference type="GO" id="GO:0032790">
    <property type="term" value="P:ribosome disassembly"/>
    <property type="evidence" value="ECO:0000250"/>
    <property type="project" value="UniProtKB"/>
</dbReference>
<dbReference type="FunFam" id="3.90.70.130:FF:000001">
    <property type="entry name" value="Probable Ufm1-specific protease 2"/>
    <property type="match status" value="1"/>
</dbReference>
<dbReference type="Gene3D" id="3.90.70.130">
    <property type="match status" value="1"/>
</dbReference>
<dbReference type="InterPro" id="IPR012462">
    <property type="entry name" value="UfSP1/2_DUB_cat"/>
</dbReference>
<dbReference type="InterPro" id="IPR049387">
    <property type="entry name" value="UfSP2-like_N"/>
</dbReference>
<dbReference type="PANTHER" id="PTHR48153">
    <property type="entry name" value="UFM1-SPECIFIC PROTEASE 2"/>
    <property type="match status" value="1"/>
</dbReference>
<dbReference type="PANTHER" id="PTHR48153:SF2">
    <property type="entry name" value="UFM1-SPECIFIC PROTEASE 2"/>
    <property type="match status" value="1"/>
</dbReference>
<dbReference type="Pfam" id="PF07910">
    <property type="entry name" value="Peptidase_C78"/>
    <property type="match status" value="1"/>
</dbReference>
<dbReference type="Pfam" id="PF20908">
    <property type="entry name" value="UfSP2_N"/>
    <property type="match status" value="1"/>
</dbReference>
<feature type="chain" id="PRO_0000280367" description="Ufm1-specific protease 2">
    <location>
        <begin position="1"/>
        <end position="401"/>
    </location>
</feature>
<feature type="active site" evidence="1">
    <location>
        <position position="234"/>
    </location>
</feature>
<feature type="active site" evidence="1">
    <location>
        <position position="358"/>
    </location>
</feature>
<feature type="active site" evidence="1">
    <location>
        <position position="360"/>
    </location>
</feature>
<gene>
    <name evidence="2" type="primary">ufsp2</name>
    <name type="ORF">zgc:64113</name>
</gene>
<accession>Q7T347</accession>
<keyword id="KW-0963">Cytoplasm</keyword>
<keyword id="KW-0256">Endoplasmic reticulum</keyword>
<keyword id="KW-0378">Hydrolase</keyword>
<keyword id="KW-0539">Nucleus</keyword>
<keyword id="KW-0645">Protease</keyword>
<keyword id="KW-1185">Reference proteome</keyword>
<keyword id="KW-0788">Thiol protease</keyword>
<keyword id="KW-0833">Ubl conjugation pathway</keyword>
<name>UFSP2_DANRE</name>
<protein>
    <recommendedName>
        <fullName evidence="2">Ufm1-specific protease 2</fullName>
        <shortName evidence="2">UfSP2</shortName>
        <ecNumber evidence="2">3.4.22.-</ecNumber>
    </recommendedName>
</protein>
<proteinExistence type="evidence at transcript level"/>
<organism>
    <name type="scientific">Danio rerio</name>
    <name type="common">Zebrafish</name>
    <name type="synonym">Brachydanio rerio</name>
    <dbReference type="NCBI Taxonomy" id="7955"/>
    <lineage>
        <taxon>Eukaryota</taxon>
        <taxon>Metazoa</taxon>
        <taxon>Chordata</taxon>
        <taxon>Craniata</taxon>
        <taxon>Vertebrata</taxon>
        <taxon>Euteleostomi</taxon>
        <taxon>Actinopterygii</taxon>
        <taxon>Neopterygii</taxon>
        <taxon>Teleostei</taxon>
        <taxon>Ostariophysi</taxon>
        <taxon>Cypriniformes</taxon>
        <taxon>Danionidae</taxon>
        <taxon>Danioninae</taxon>
        <taxon>Danio</taxon>
    </lineage>
</organism>
<evidence type="ECO:0000250" key="1">
    <source>
        <dbReference type="UniProtKB" id="Q99K23"/>
    </source>
</evidence>
<evidence type="ECO:0000250" key="2">
    <source>
        <dbReference type="UniProtKB" id="Q9NUQ7"/>
    </source>
</evidence>
<evidence type="ECO:0000305" key="3"/>